<reference key="1">
    <citation type="journal article" date="2009" name="Proc. Natl. Acad. Sci. U.S.A.">
        <title>The mosaic genome structure of the Wolbachia wRi strain infecting Drosophila simulans.</title>
        <authorList>
            <person name="Klasson L."/>
            <person name="Westberg J."/>
            <person name="Sapountzis P."/>
            <person name="Naeslund K."/>
            <person name="Lutnaes Y."/>
            <person name="Darby A.C."/>
            <person name="Veneti Z."/>
            <person name="Chen L."/>
            <person name="Braig H.R."/>
            <person name="Garrett R."/>
            <person name="Bourtzis K."/>
            <person name="Andersson S.G."/>
        </authorList>
    </citation>
    <scope>NUCLEOTIDE SEQUENCE [LARGE SCALE GENOMIC DNA]</scope>
    <source>
        <strain>wRi</strain>
    </source>
</reference>
<accession>C0R2L5</accession>
<organism>
    <name type="scientific">Wolbachia sp. subsp. Drosophila simulans (strain wRi)</name>
    <dbReference type="NCBI Taxonomy" id="66084"/>
    <lineage>
        <taxon>Bacteria</taxon>
        <taxon>Pseudomonadati</taxon>
        <taxon>Pseudomonadota</taxon>
        <taxon>Alphaproteobacteria</taxon>
        <taxon>Rickettsiales</taxon>
        <taxon>Anaplasmataceae</taxon>
        <taxon>Wolbachieae</taxon>
        <taxon>Wolbachia</taxon>
    </lineage>
</organism>
<protein>
    <recommendedName>
        <fullName evidence="1">Small ribosomal subunit protein uS2</fullName>
    </recommendedName>
    <alternativeName>
        <fullName evidence="3">30S ribosomal protein S2</fullName>
    </alternativeName>
</protein>
<sequence length="282" mass="31832">MTNLPKVTVRDLAESGVHFGHKISRWNAKIAPYIYGVHQENRIHIIDLRKTLPLLQVAMKVLYDVAFQGGRILFVGTKFQAFDIIASEAIRCGQYYVNHRWLGGMLTNWGTVSSSIKTLMQYEKILNDEDSILTKKELGNIEKKKQKLDKALGGIREMGAIPDILFIIDTNKEHIAVKEAKKLGIPIVAILDTNSDPDGITYLIPGNDDSRKSIELYCKLATDSILAGIESSLAKSGVKIDDIRGDEFIQEKEDGIVQTKRRRSKVYKEEEREVVTNEDESR</sequence>
<evidence type="ECO:0000255" key="1">
    <source>
        <dbReference type="HAMAP-Rule" id="MF_00291"/>
    </source>
</evidence>
<evidence type="ECO:0000256" key="2">
    <source>
        <dbReference type="SAM" id="MobiDB-lite"/>
    </source>
</evidence>
<evidence type="ECO:0000305" key="3"/>
<proteinExistence type="inferred from homology"/>
<name>RS2_WOLWR</name>
<comment type="similarity">
    <text evidence="1">Belongs to the universal ribosomal protein uS2 family.</text>
</comment>
<gene>
    <name evidence="1" type="primary">rpsB</name>
    <name type="ordered locus">WRi_003460</name>
</gene>
<feature type="chain" id="PRO_1000194355" description="Small ribosomal subunit protein uS2">
    <location>
        <begin position="1"/>
        <end position="282"/>
    </location>
</feature>
<feature type="region of interest" description="Disordered" evidence="2">
    <location>
        <begin position="260"/>
        <end position="282"/>
    </location>
</feature>
<feature type="compositionally biased region" description="Basic and acidic residues" evidence="2">
    <location>
        <begin position="266"/>
        <end position="282"/>
    </location>
</feature>
<dbReference type="EMBL" id="CP001391">
    <property type="protein sequence ID" value="ACN95157.1"/>
    <property type="molecule type" value="Genomic_DNA"/>
</dbReference>
<dbReference type="RefSeq" id="WP_012673140.1">
    <property type="nucleotide sequence ID" value="NZ_MKIF01000165.1"/>
</dbReference>
<dbReference type="SMR" id="C0R2L5"/>
<dbReference type="STRING" id="66084.WRi_003460"/>
<dbReference type="KEGG" id="wri:WRi_003460"/>
<dbReference type="HOGENOM" id="CLU_040318_2_1_5"/>
<dbReference type="Proteomes" id="UP000001293">
    <property type="component" value="Chromosome"/>
</dbReference>
<dbReference type="GO" id="GO:0022627">
    <property type="term" value="C:cytosolic small ribosomal subunit"/>
    <property type="evidence" value="ECO:0007669"/>
    <property type="project" value="TreeGrafter"/>
</dbReference>
<dbReference type="GO" id="GO:0003735">
    <property type="term" value="F:structural constituent of ribosome"/>
    <property type="evidence" value="ECO:0007669"/>
    <property type="project" value="InterPro"/>
</dbReference>
<dbReference type="GO" id="GO:0006412">
    <property type="term" value="P:translation"/>
    <property type="evidence" value="ECO:0007669"/>
    <property type="project" value="UniProtKB-UniRule"/>
</dbReference>
<dbReference type="CDD" id="cd01425">
    <property type="entry name" value="RPS2"/>
    <property type="match status" value="1"/>
</dbReference>
<dbReference type="Gene3D" id="3.40.50.10490">
    <property type="entry name" value="Glucose-6-phosphate isomerase like protein, domain 1"/>
    <property type="match status" value="1"/>
</dbReference>
<dbReference type="Gene3D" id="1.10.287.610">
    <property type="entry name" value="Helix hairpin bin"/>
    <property type="match status" value="1"/>
</dbReference>
<dbReference type="HAMAP" id="MF_00291_B">
    <property type="entry name" value="Ribosomal_uS2_B"/>
    <property type="match status" value="1"/>
</dbReference>
<dbReference type="InterPro" id="IPR001865">
    <property type="entry name" value="Ribosomal_uS2"/>
</dbReference>
<dbReference type="InterPro" id="IPR005706">
    <property type="entry name" value="Ribosomal_uS2_bac/mit/plastid"/>
</dbReference>
<dbReference type="InterPro" id="IPR018130">
    <property type="entry name" value="Ribosomal_uS2_CS"/>
</dbReference>
<dbReference type="InterPro" id="IPR023591">
    <property type="entry name" value="Ribosomal_uS2_flav_dom_sf"/>
</dbReference>
<dbReference type="NCBIfam" id="TIGR01011">
    <property type="entry name" value="rpsB_bact"/>
    <property type="match status" value="1"/>
</dbReference>
<dbReference type="PANTHER" id="PTHR12534">
    <property type="entry name" value="30S RIBOSOMAL PROTEIN S2 PROKARYOTIC AND ORGANELLAR"/>
    <property type="match status" value="1"/>
</dbReference>
<dbReference type="PANTHER" id="PTHR12534:SF0">
    <property type="entry name" value="SMALL RIBOSOMAL SUBUNIT PROTEIN US2M"/>
    <property type="match status" value="1"/>
</dbReference>
<dbReference type="Pfam" id="PF00318">
    <property type="entry name" value="Ribosomal_S2"/>
    <property type="match status" value="1"/>
</dbReference>
<dbReference type="PRINTS" id="PR00395">
    <property type="entry name" value="RIBOSOMALS2"/>
</dbReference>
<dbReference type="SUPFAM" id="SSF52313">
    <property type="entry name" value="Ribosomal protein S2"/>
    <property type="match status" value="1"/>
</dbReference>
<dbReference type="PROSITE" id="PS00963">
    <property type="entry name" value="RIBOSOMAL_S2_2"/>
    <property type="match status" value="1"/>
</dbReference>
<keyword id="KW-0687">Ribonucleoprotein</keyword>
<keyword id="KW-0689">Ribosomal protein</keyword>